<accession>Q54QQ2</accession>
<name>Y5634_DICDI</name>
<sequence>MAPRKKAVTKKKTVEKSPPIEEEIIEEPVDEIVESDGDDKKNKKKGKRKSSKKSKKEKEENVEEEEQDQEEEEEGNKKQKEENDADKKSRKHDEHRKKRDSKNRRSHSKSDENEEGEEDDEERRKKRRRRKHREKRKKNGNKEEEEEEEQDDEHEDQNVEEDEEDVNVEKQKQQQQQSDFDEEEKEEEKEEEEEEEQIEIKKRSKKRNSIDSGRKDKSKKRKSKKKKRGQNDDDDDDDDNDDDDDDQDEEKEYEQDEDVNQESIVSEKEEEEDEEKQSQGSEDEEKQSENERRNDQDYTDRERERNRSRDRDSRDYSSRSDHRDYRDRDRDRSRDRDRDYRDSRDYRDRDRDYRDRDRDHYSSGGSSSSSRDHRDHRDRDYRDRDRDHRDRSRDRDRDHYSSSSGSSSNRRSRDRDNDSKRDEKSSSSNNSNNSTSTTSNNNASSNNVKIVQPPKENFFSNYRAIQSSIIPTHNKSKFGERILSIAPTEPPPNFQIPLSKPYRDDSLQQNNDNNNNSSNNNSNNSNNNFNNDNNPYNNSNNYNMNNSNTSPYNNSNNSNSNSSYYNDNDYNNNNNNNNNSNNNNNNNNNNNNNNNNNNNNNNNNFNNSNSNSSESKPNYFNNLSNVFNQITKPLENYKNNGKNENNNNNNNKNKNEDEKRIDLVQTKLSLKSSKSTPQTYNEKEFKVQISNIVVKKLKKYYKTKITTKEDFQYLGKKFTDFVITKERGNQTINKDSEKKIEKVIDNYFEKKEVYDRKKDKDYKKDDGDKLINSSIDISNDSNLSESSITITSTSTSTSTSALTSPKTTGTTTSTITTVTSTSTSSIENTKILVDDEKFKTNIQNETSKESNSI</sequence>
<protein>
    <recommendedName>
        <fullName>Uncharacterized protein DDB_G0283697</fullName>
    </recommendedName>
</protein>
<organism>
    <name type="scientific">Dictyostelium discoideum</name>
    <name type="common">Social amoeba</name>
    <dbReference type="NCBI Taxonomy" id="44689"/>
    <lineage>
        <taxon>Eukaryota</taxon>
        <taxon>Amoebozoa</taxon>
        <taxon>Evosea</taxon>
        <taxon>Eumycetozoa</taxon>
        <taxon>Dictyostelia</taxon>
        <taxon>Dictyosteliales</taxon>
        <taxon>Dictyosteliaceae</taxon>
        <taxon>Dictyostelium</taxon>
    </lineage>
</organism>
<keyword id="KW-1185">Reference proteome</keyword>
<gene>
    <name type="ORF">DDB_G0283697</name>
</gene>
<proteinExistence type="predicted"/>
<evidence type="ECO:0000256" key="1">
    <source>
        <dbReference type="SAM" id="MobiDB-lite"/>
    </source>
</evidence>
<feature type="chain" id="PRO_0000350888" description="Uncharacterized protein DDB_G0283697">
    <location>
        <begin position="1"/>
        <end position="853"/>
    </location>
</feature>
<feature type="region of interest" description="Disordered" evidence="1">
    <location>
        <begin position="1"/>
        <end position="448"/>
    </location>
</feature>
<feature type="region of interest" description="Disordered" evidence="1">
    <location>
        <begin position="485"/>
        <end position="621"/>
    </location>
</feature>
<feature type="region of interest" description="Disordered" evidence="1">
    <location>
        <begin position="635"/>
        <end position="658"/>
    </location>
</feature>
<feature type="compositionally biased region" description="Basic residues" evidence="1">
    <location>
        <begin position="1"/>
        <end position="11"/>
    </location>
</feature>
<feature type="compositionally biased region" description="Acidic residues" evidence="1">
    <location>
        <begin position="20"/>
        <end position="37"/>
    </location>
</feature>
<feature type="compositionally biased region" description="Basic residues" evidence="1">
    <location>
        <begin position="42"/>
        <end position="55"/>
    </location>
</feature>
<feature type="compositionally biased region" description="Acidic residues" evidence="1">
    <location>
        <begin position="60"/>
        <end position="74"/>
    </location>
</feature>
<feature type="compositionally biased region" description="Basic and acidic residues" evidence="1">
    <location>
        <begin position="75"/>
        <end position="87"/>
    </location>
</feature>
<feature type="compositionally biased region" description="Basic residues" evidence="1">
    <location>
        <begin position="88"/>
        <end position="107"/>
    </location>
</feature>
<feature type="compositionally biased region" description="Acidic residues" evidence="1">
    <location>
        <begin position="112"/>
        <end position="121"/>
    </location>
</feature>
<feature type="compositionally biased region" description="Basic residues" evidence="1">
    <location>
        <begin position="124"/>
        <end position="139"/>
    </location>
</feature>
<feature type="compositionally biased region" description="Acidic residues" evidence="1">
    <location>
        <begin position="143"/>
        <end position="166"/>
    </location>
</feature>
<feature type="compositionally biased region" description="Acidic residues" evidence="1">
    <location>
        <begin position="179"/>
        <end position="197"/>
    </location>
</feature>
<feature type="compositionally biased region" description="Basic residues" evidence="1">
    <location>
        <begin position="216"/>
        <end position="228"/>
    </location>
</feature>
<feature type="compositionally biased region" description="Acidic residues" evidence="1">
    <location>
        <begin position="232"/>
        <end position="260"/>
    </location>
</feature>
<feature type="compositionally biased region" description="Acidic residues" evidence="1">
    <location>
        <begin position="268"/>
        <end position="286"/>
    </location>
</feature>
<feature type="compositionally biased region" description="Basic and acidic residues" evidence="1">
    <location>
        <begin position="287"/>
        <end position="361"/>
    </location>
</feature>
<feature type="compositionally biased region" description="Basic and acidic residues" evidence="1">
    <location>
        <begin position="370"/>
        <end position="400"/>
    </location>
</feature>
<feature type="compositionally biased region" description="Basic and acidic residues" evidence="1">
    <location>
        <begin position="411"/>
        <end position="425"/>
    </location>
</feature>
<feature type="compositionally biased region" description="Low complexity" evidence="1">
    <location>
        <begin position="426"/>
        <end position="447"/>
    </location>
</feature>
<feature type="compositionally biased region" description="Low complexity" evidence="1">
    <location>
        <begin position="510"/>
        <end position="613"/>
    </location>
</feature>
<feature type="compositionally biased region" description="Low complexity" evidence="1">
    <location>
        <begin position="636"/>
        <end position="652"/>
    </location>
</feature>
<reference key="1">
    <citation type="journal article" date="2005" name="Nature">
        <title>The genome of the social amoeba Dictyostelium discoideum.</title>
        <authorList>
            <person name="Eichinger L."/>
            <person name="Pachebat J.A."/>
            <person name="Gloeckner G."/>
            <person name="Rajandream M.A."/>
            <person name="Sucgang R."/>
            <person name="Berriman M."/>
            <person name="Song J."/>
            <person name="Olsen R."/>
            <person name="Szafranski K."/>
            <person name="Xu Q."/>
            <person name="Tunggal B."/>
            <person name="Kummerfeld S."/>
            <person name="Madera M."/>
            <person name="Konfortov B.A."/>
            <person name="Rivero F."/>
            <person name="Bankier A.T."/>
            <person name="Lehmann R."/>
            <person name="Hamlin N."/>
            <person name="Davies R."/>
            <person name="Gaudet P."/>
            <person name="Fey P."/>
            <person name="Pilcher K."/>
            <person name="Chen G."/>
            <person name="Saunders D."/>
            <person name="Sodergren E.J."/>
            <person name="Davis P."/>
            <person name="Kerhornou A."/>
            <person name="Nie X."/>
            <person name="Hall N."/>
            <person name="Anjard C."/>
            <person name="Hemphill L."/>
            <person name="Bason N."/>
            <person name="Farbrother P."/>
            <person name="Desany B."/>
            <person name="Just E."/>
            <person name="Morio T."/>
            <person name="Rost R."/>
            <person name="Churcher C.M."/>
            <person name="Cooper J."/>
            <person name="Haydock S."/>
            <person name="van Driessche N."/>
            <person name="Cronin A."/>
            <person name="Goodhead I."/>
            <person name="Muzny D.M."/>
            <person name="Mourier T."/>
            <person name="Pain A."/>
            <person name="Lu M."/>
            <person name="Harper D."/>
            <person name="Lindsay R."/>
            <person name="Hauser H."/>
            <person name="James K.D."/>
            <person name="Quiles M."/>
            <person name="Madan Babu M."/>
            <person name="Saito T."/>
            <person name="Buchrieser C."/>
            <person name="Wardroper A."/>
            <person name="Felder M."/>
            <person name="Thangavelu M."/>
            <person name="Johnson D."/>
            <person name="Knights A."/>
            <person name="Loulseged H."/>
            <person name="Mungall K.L."/>
            <person name="Oliver K."/>
            <person name="Price C."/>
            <person name="Quail M.A."/>
            <person name="Urushihara H."/>
            <person name="Hernandez J."/>
            <person name="Rabbinowitsch E."/>
            <person name="Steffen D."/>
            <person name="Sanders M."/>
            <person name="Ma J."/>
            <person name="Kohara Y."/>
            <person name="Sharp S."/>
            <person name="Simmonds M.N."/>
            <person name="Spiegler S."/>
            <person name="Tivey A."/>
            <person name="Sugano S."/>
            <person name="White B."/>
            <person name="Walker D."/>
            <person name="Woodward J.R."/>
            <person name="Winckler T."/>
            <person name="Tanaka Y."/>
            <person name="Shaulsky G."/>
            <person name="Schleicher M."/>
            <person name="Weinstock G.M."/>
            <person name="Rosenthal A."/>
            <person name="Cox E.C."/>
            <person name="Chisholm R.L."/>
            <person name="Gibbs R.A."/>
            <person name="Loomis W.F."/>
            <person name="Platzer M."/>
            <person name="Kay R.R."/>
            <person name="Williams J.G."/>
            <person name="Dear P.H."/>
            <person name="Noegel A.A."/>
            <person name="Barrell B.G."/>
            <person name="Kuspa A."/>
        </authorList>
    </citation>
    <scope>NUCLEOTIDE SEQUENCE [LARGE SCALE GENOMIC DNA]</scope>
    <source>
        <strain>AX4</strain>
    </source>
</reference>
<dbReference type="EMBL" id="AAFI02000056">
    <property type="protein sequence ID" value="EAL65615.1"/>
    <property type="molecule type" value="Genomic_DNA"/>
</dbReference>
<dbReference type="RefSeq" id="XP_638971.1">
    <property type="nucleotide sequence ID" value="XM_633879.1"/>
</dbReference>
<dbReference type="SMR" id="Q54QQ2"/>
<dbReference type="STRING" id="44689.Q54QQ2"/>
<dbReference type="GlyGen" id="Q54QQ2">
    <property type="glycosylation" value="1 site"/>
</dbReference>
<dbReference type="PaxDb" id="44689-DDB0237901"/>
<dbReference type="EnsemblProtists" id="EAL65615">
    <property type="protein sequence ID" value="EAL65615"/>
    <property type="gene ID" value="DDB_G0283697"/>
</dbReference>
<dbReference type="GeneID" id="8624217"/>
<dbReference type="KEGG" id="ddi:DDB_G0283697"/>
<dbReference type="dictyBase" id="DDB_G0283697"/>
<dbReference type="VEuPathDB" id="AmoebaDB:DDB_G0283697"/>
<dbReference type="eggNOG" id="ENOG502RFV1">
    <property type="taxonomic scope" value="Eukaryota"/>
</dbReference>
<dbReference type="HOGENOM" id="CLU_334766_0_0_1"/>
<dbReference type="InParanoid" id="Q54QQ2"/>
<dbReference type="OMA" id="FEFDING"/>
<dbReference type="PRO" id="PR:Q54QQ2"/>
<dbReference type="Proteomes" id="UP000002195">
    <property type="component" value="Chromosome 4"/>
</dbReference>
<dbReference type="GO" id="GO:0005694">
    <property type="term" value="C:chromosome"/>
    <property type="evidence" value="ECO:0007669"/>
    <property type="project" value="InterPro"/>
</dbReference>
<dbReference type="GO" id="GO:0006355">
    <property type="term" value="P:regulation of DNA-templated transcription"/>
    <property type="evidence" value="ECO:0007669"/>
    <property type="project" value="InterPro"/>
</dbReference>
<dbReference type="Gene3D" id="1.10.1740.100">
    <property type="entry name" value="Set2, Rpb1 interacting domain"/>
    <property type="match status" value="1"/>
</dbReference>
<dbReference type="InterPro" id="IPR013257">
    <property type="entry name" value="SRI"/>
</dbReference>
<dbReference type="InterPro" id="IPR038190">
    <property type="entry name" value="SRI_sf"/>
</dbReference>
<dbReference type="Pfam" id="PF08236">
    <property type="entry name" value="SRI"/>
    <property type="match status" value="1"/>
</dbReference>